<protein>
    <recommendedName>
        <fullName evidence="1">Ribonuclease HIII</fullName>
        <shortName evidence="1">RNase HIII</shortName>
        <ecNumber evidence="1">3.1.26.4</ecNumber>
    </recommendedName>
</protein>
<proteinExistence type="inferred from homology"/>
<dbReference type="EC" id="3.1.26.4" evidence="1"/>
<dbReference type="EMBL" id="BX908798">
    <property type="protein sequence ID" value="CAF23403.1"/>
    <property type="molecule type" value="Genomic_DNA"/>
</dbReference>
<dbReference type="RefSeq" id="WP_011175229.1">
    <property type="nucleotide sequence ID" value="NC_005861.2"/>
</dbReference>
<dbReference type="SMR" id="Q6MDE6"/>
<dbReference type="STRING" id="264201.pc0679"/>
<dbReference type="KEGG" id="pcu:PC_RS03255"/>
<dbReference type="eggNOG" id="COG1039">
    <property type="taxonomic scope" value="Bacteria"/>
</dbReference>
<dbReference type="HOGENOM" id="CLU_059546_1_0_0"/>
<dbReference type="OrthoDB" id="9777935at2"/>
<dbReference type="Proteomes" id="UP000000529">
    <property type="component" value="Chromosome"/>
</dbReference>
<dbReference type="GO" id="GO:0005737">
    <property type="term" value="C:cytoplasm"/>
    <property type="evidence" value="ECO:0007669"/>
    <property type="project" value="UniProtKB-SubCell"/>
</dbReference>
<dbReference type="GO" id="GO:0032299">
    <property type="term" value="C:ribonuclease H2 complex"/>
    <property type="evidence" value="ECO:0007669"/>
    <property type="project" value="TreeGrafter"/>
</dbReference>
<dbReference type="GO" id="GO:0000287">
    <property type="term" value="F:magnesium ion binding"/>
    <property type="evidence" value="ECO:0007669"/>
    <property type="project" value="UniProtKB-UniRule"/>
</dbReference>
<dbReference type="GO" id="GO:0003723">
    <property type="term" value="F:RNA binding"/>
    <property type="evidence" value="ECO:0007669"/>
    <property type="project" value="InterPro"/>
</dbReference>
<dbReference type="GO" id="GO:0004523">
    <property type="term" value="F:RNA-DNA hybrid ribonuclease activity"/>
    <property type="evidence" value="ECO:0007669"/>
    <property type="project" value="UniProtKB-UniRule"/>
</dbReference>
<dbReference type="GO" id="GO:0043137">
    <property type="term" value="P:DNA replication, removal of RNA primer"/>
    <property type="evidence" value="ECO:0007669"/>
    <property type="project" value="TreeGrafter"/>
</dbReference>
<dbReference type="GO" id="GO:0006298">
    <property type="term" value="P:mismatch repair"/>
    <property type="evidence" value="ECO:0007669"/>
    <property type="project" value="TreeGrafter"/>
</dbReference>
<dbReference type="CDD" id="cd06590">
    <property type="entry name" value="RNase_HII_bacteria_HIII_like"/>
    <property type="match status" value="1"/>
</dbReference>
<dbReference type="CDD" id="cd14796">
    <property type="entry name" value="RNAse_HIII_N"/>
    <property type="match status" value="1"/>
</dbReference>
<dbReference type="Gene3D" id="3.30.420.10">
    <property type="entry name" value="Ribonuclease H-like superfamily/Ribonuclease H"/>
    <property type="match status" value="1"/>
</dbReference>
<dbReference type="Gene3D" id="3.30.310.10">
    <property type="entry name" value="TATA-Binding Protein"/>
    <property type="match status" value="1"/>
</dbReference>
<dbReference type="HAMAP" id="MF_00053">
    <property type="entry name" value="RNase_HIII"/>
    <property type="match status" value="1"/>
</dbReference>
<dbReference type="InterPro" id="IPR001352">
    <property type="entry name" value="RNase_HII/HIII"/>
</dbReference>
<dbReference type="InterPro" id="IPR024567">
    <property type="entry name" value="RNase_HII/HIII_dom"/>
</dbReference>
<dbReference type="InterPro" id="IPR004641">
    <property type="entry name" value="RNase_HIII"/>
</dbReference>
<dbReference type="InterPro" id="IPR024568">
    <property type="entry name" value="RNase_HIII_N"/>
</dbReference>
<dbReference type="InterPro" id="IPR012337">
    <property type="entry name" value="RNaseH-like_sf"/>
</dbReference>
<dbReference type="InterPro" id="IPR036397">
    <property type="entry name" value="RNaseH_sf"/>
</dbReference>
<dbReference type="InterPro" id="IPR012295">
    <property type="entry name" value="TBP_dom_sf"/>
</dbReference>
<dbReference type="NCBIfam" id="TIGR00716">
    <property type="entry name" value="rnhC"/>
    <property type="match status" value="1"/>
</dbReference>
<dbReference type="PANTHER" id="PTHR10954:SF23">
    <property type="entry name" value="RIBONUCLEASE"/>
    <property type="match status" value="1"/>
</dbReference>
<dbReference type="PANTHER" id="PTHR10954">
    <property type="entry name" value="RIBONUCLEASE H2 SUBUNIT A"/>
    <property type="match status" value="1"/>
</dbReference>
<dbReference type="Pfam" id="PF11858">
    <property type="entry name" value="DUF3378"/>
    <property type="match status" value="1"/>
</dbReference>
<dbReference type="Pfam" id="PF01351">
    <property type="entry name" value="RNase_HII"/>
    <property type="match status" value="1"/>
</dbReference>
<dbReference type="PIRSF" id="PIRSF037748">
    <property type="entry name" value="RnhC"/>
    <property type="match status" value="1"/>
</dbReference>
<dbReference type="SUPFAM" id="SSF53098">
    <property type="entry name" value="Ribonuclease H-like"/>
    <property type="match status" value="1"/>
</dbReference>
<dbReference type="PROSITE" id="PS51975">
    <property type="entry name" value="RNASE_H_2"/>
    <property type="match status" value="1"/>
</dbReference>
<feature type="chain" id="PRO_0000111690" description="Ribonuclease HIII">
    <location>
        <begin position="1"/>
        <end position="301"/>
    </location>
</feature>
<feature type="domain" description="RNase H type-2" evidence="2">
    <location>
        <begin position="90"/>
        <end position="301"/>
    </location>
</feature>
<feature type="binding site" evidence="1">
    <location>
        <position position="96"/>
    </location>
    <ligand>
        <name>a divalent metal cation</name>
        <dbReference type="ChEBI" id="CHEBI:60240"/>
    </ligand>
</feature>
<feature type="binding site" evidence="1">
    <location>
        <position position="97"/>
    </location>
    <ligand>
        <name>a divalent metal cation</name>
        <dbReference type="ChEBI" id="CHEBI:60240"/>
    </ligand>
</feature>
<feature type="binding site" evidence="1">
    <location>
        <position position="198"/>
    </location>
    <ligand>
        <name>a divalent metal cation</name>
        <dbReference type="ChEBI" id="CHEBI:60240"/>
    </ligand>
</feature>
<name>RNH3_PARUW</name>
<keyword id="KW-0963">Cytoplasm</keyword>
<keyword id="KW-0255">Endonuclease</keyword>
<keyword id="KW-0378">Hydrolase</keyword>
<keyword id="KW-0460">Magnesium</keyword>
<keyword id="KW-0479">Metal-binding</keyword>
<keyword id="KW-0540">Nuclease</keyword>
<keyword id="KW-1185">Reference proteome</keyword>
<sequence>MSSLPPFVTTLDLKLAEKLLKDLQQQGFSITIPAYTRFSASKKGLTCTLYTSGKLVVQGKEQAHFIEFYLEPEILESFGFSHPTTKIDLTPHIGIDESGKGDFFGPLCIAGVYIQANQFSKLQALGVKDSKTLSDKTIRQLASQIKNLCLYHIVKINPAKYNEIYQDFKNLNHLLAWGHATTIEQLILQSGCQTVIVDQFADEKVVLLALKRKKLDVNLTQRHRAEDDLAVAAASILARQAFIDGLEQLSKEIQIPLPKGSSSATQKAGKEVLRKWGEERLRSICKQHFKTLDAILGKVGK</sequence>
<organism>
    <name type="scientific">Protochlamydia amoebophila (strain UWE25)</name>
    <dbReference type="NCBI Taxonomy" id="264201"/>
    <lineage>
        <taxon>Bacteria</taxon>
        <taxon>Pseudomonadati</taxon>
        <taxon>Chlamydiota</taxon>
        <taxon>Chlamydiia</taxon>
        <taxon>Parachlamydiales</taxon>
        <taxon>Parachlamydiaceae</taxon>
        <taxon>Candidatus Protochlamydia</taxon>
    </lineage>
</organism>
<reference key="1">
    <citation type="journal article" date="2004" name="Science">
        <title>Illuminating the evolutionary history of chlamydiae.</title>
        <authorList>
            <person name="Horn M."/>
            <person name="Collingro A."/>
            <person name="Schmitz-Esser S."/>
            <person name="Beier C.L."/>
            <person name="Purkhold U."/>
            <person name="Fartmann B."/>
            <person name="Brandt P."/>
            <person name="Nyakatura G.J."/>
            <person name="Droege M."/>
            <person name="Frishman D."/>
            <person name="Rattei T."/>
            <person name="Mewes H.-W."/>
            <person name="Wagner M."/>
        </authorList>
    </citation>
    <scope>NUCLEOTIDE SEQUENCE [LARGE SCALE GENOMIC DNA]</scope>
    <source>
        <strain>UWE25</strain>
    </source>
</reference>
<evidence type="ECO:0000255" key="1">
    <source>
        <dbReference type="HAMAP-Rule" id="MF_00053"/>
    </source>
</evidence>
<evidence type="ECO:0000255" key="2">
    <source>
        <dbReference type="PROSITE-ProRule" id="PRU01319"/>
    </source>
</evidence>
<comment type="function">
    <text evidence="1">Endonuclease that specifically degrades the RNA of RNA-DNA hybrids.</text>
</comment>
<comment type="catalytic activity">
    <reaction evidence="1">
        <text>Endonucleolytic cleavage to 5'-phosphomonoester.</text>
        <dbReference type="EC" id="3.1.26.4"/>
    </reaction>
</comment>
<comment type="cofactor">
    <cofactor evidence="1">
        <name>Mn(2+)</name>
        <dbReference type="ChEBI" id="CHEBI:29035"/>
    </cofactor>
    <cofactor evidence="1">
        <name>Mg(2+)</name>
        <dbReference type="ChEBI" id="CHEBI:18420"/>
    </cofactor>
    <text evidence="1">Manganese or magnesium. Binds 1 divalent metal ion per monomer in the absence of substrate. May bind a second metal ion after substrate binding.</text>
</comment>
<comment type="subcellular location">
    <subcellularLocation>
        <location evidence="1">Cytoplasm</location>
    </subcellularLocation>
</comment>
<comment type="similarity">
    <text evidence="1">Belongs to the RNase HII family. RnhC subfamily.</text>
</comment>
<gene>
    <name evidence="1" type="primary">rnhC</name>
    <name type="ordered locus">pc0679</name>
</gene>
<accession>Q6MDE6</accession>